<organism>
    <name type="scientific">Leuconostoc citreum (strain KM20)</name>
    <dbReference type="NCBI Taxonomy" id="349519"/>
    <lineage>
        <taxon>Bacteria</taxon>
        <taxon>Bacillati</taxon>
        <taxon>Bacillota</taxon>
        <taxon>Bacilli</taxon>
        <taxon>Lactobacillales</taxon>
        <taxon>Lactobacillaceae</taxon>
        <taxon>Leuconostoc</taxon>
    </lineage>
</organism>
<gene>
    <name evidence="1" type="primary">glmM</name>
    <name type="ordered locus">LCK_01295</name>
</gene>
<protein>
    <recommendedName>
        <fullName evidence="1">Phosphoglucosamine mutase</fullName>
        <ecNumber evidence="1">5.4.2.10</ecNumber>
    </recommendedName>
</protein>
<dbReference type="EC" id="5.4.2.10" evidence="1"/>
<dbReference type="EMBL" id="DQ489736">
    <property type="protein sequence ID" value="ACA83119.1"/>
    <property type="molecule type" value="Genomic_DNA"/>
</dbReference>
<dbReference type="RefSeq" id="WP_004903554.1">
    <property type="nucleotide sequence ID" value="NC_010471.1"/>
</dbReference>
<dbReference type="SMR" id="B1N017"/>
<dbReference type="STRING" id="349519.LCK_01295"/>
<dbReference type="KEGG" id="lci:LCK_01295"/>
<dbReference type="eggNOG" id="COG1109">
    <property type="taxonomic scope" value="Bacteria"/>
</dbReference>
<dbReference type="HOGENOM" id="CLU_016950_7_0_9"/>
<dbReference type="OrthoDB" id="9806956at2"/>
<dbReference type="Proteomes" id="UP000002166">
    <property type="component" value="Chromosome"/>
</dbReference>
<dbReference type="GO" id="GO:0005829">
    <property type="term" value="C:cytosol"/>
    <property type="evidence" value="ECO:0007669"/>
    <property type="project" value="TreeGrafter"/>
</dbReference>
<dbReference type="GO" id="GO:0000287">
    <property type="term" value="F:magnesium ion binding"/>
    <property type="evidence" value="ECO:0007669"/>
    <property type="project" value="UniProtKB-UniRule"/>
</dbReference>
<dbReference type="GO" id="GO:0008966">
    <property type="term" value="F:phosphoglucosamine mutase activity"/>
    <property type="evidence" value="ECO:0007669"/>
    <property type="project" value="UniProtKB-UniRule"/>
</dbReference>
<dbReference type="GO" id="GO:0004615">
    <property type="term" value="F:phosphomannomutase activity"/>
    <property type="evidence" value="ECO:0007669"/>
    <property type="project" value="TreeGrafter"/>
</dbReference>
<dbReference type="GO" id="GO:0005975">
    <property type="term" value="P:carbohydrate metabolic process"/>
    <property type="evidence" value="ECO:0007669"/>
    <property type="project" value="InterPro"/>
</dbReference>
<dbReference type="GO" id="GO:0009252">
    <property type="term" value="P:peptidoglycan biosynthetic process"/>
    <property type="evidence" value="ECO:0007669"/>
    <property type="project" value="TreeGrafter"/>
</dbReference>
<dbReference type="GO" id="GO:0006048">
    <property type="term" value="P:UDP-N-acetylglucosamine biosynthetic process"/>
    <property type="evidence" value="ECO:0007669"/>
    <property type="project" value="TreeGrafter"/>
</dbReference>
<dbReference type="CDD" id="cd05802">
    <property type="entry name" value="GlmM"/>
    <property type="match status" value="1"/>
</dbReference>
<dbReference type="FunFam" id="3.30.310.50:FF:000001">
    <property type="entry name" value="Phosphoglucosamine mutase"/>
    <property type="match status" value="1"/>
</dbReference>
<dbReference type="FunFam" id="3.40.120.10:FF:000001">
    <property type="entry name" value="Phosphoglucosamine mutase"/>
    <property type="match status" value="1"/>
</dbReference>
<dbReference type="FunFam" id="3.40.120.10:FF:000002">
    <property type="entry name" value="Phosphoglucosamine mutase"/>
    <property type="match status" value="1"/>
</dbReference>
<dbReference type="Gene3D" id="3.40.120.10">
    <property type="entry name" value="Alpha-D-Glucose-1,6-Bisphosphate, subunit A, domain 3"/>
    <property type="match status" value="3"/>
</dbReference>
<dbReference type="Gene3D" id="3.30.310.50">
    <property type="entry name" value="Alpha-D-phosphohexomutase, C-terminal domain"/>
    <property type="match status" value="1"/>
</dbReference>
<dbReference type="HAMAP" id="MF_01554_B">
    <property type="entry name" value="GlmM_B"/>
    <property type="match status" value="1"/>
</dbReference>
<dbReference type="InterPro" id="IPR005844">
    <property type="entry name" value="A-D-PHexomutase_a/b/a-I"/>
</dbReference>
<dbReference type="InterPro" id="IPR016055">
    <property type="entry name" value="A-D-PHexomutase_a/b/a-I/II/III"/>
</dbReference>
<dbReference type="InterPro" id="IPR005845">
    <property type="entry name" value="A-D-PHexomutase_a/b/a-II"/>
</dbReference>
<dbReference type="InterPro" id="IPR005846">
    <property type="entry name" value="A-D-PHexomutase_a/b/a-III"/>
</dbReference>
<dbReference type="InterPro" id="IPR005843">
    <property type="entry name" value="A-D-PHexomutase_C"/>
</dbReference>
<dbReference type="InterPro" id="IPR036900">
    <property type="entry name" value="A-D-PHexomutase_C_sf"/>
</dbReference>
<dbReference type="InterPro" id="IPR016066">
    <property type="entry name" value="A-D-PHexomutase_CS"/>
</dbReference>
<dbReference type="InterPro" id="IPR005841">
    <property type="entry name" value="Alpha-D-phosphohexomutase_SF"/>
</dbReference>
<dbReference type="InterPro" id="IPR006352">
    <property type="entry name" value="GlmM_bact"/>
</dbReference>
<dbReference type="InterPro" id="IPR050060">
    <property type="entry name" value="Phosphoglucosamine_mutase"/>
</dbReference>
<dbReference type="NCBIfam" id="TIGR01455">
    <property type="entry name" value="glmM"/>
    <property type="match status" value="1"/>
</dbReference>
<dbReference type="PANTHER" id="PTHR42946:SF1">
    <property type="entry name" value="PHOSPHOGLUCOMUTASE (ALPHA-D-GLUCOSE-1,6-BISPHOSPHATE-DEPENDENT)"/>
    <property type="match status" value="1"/>
</dbReference>
<dbReference type="PANTHER" id="PTHR42946">
    <property type="entry name" value="PHOSPHOHEXOSE MUTASE"/>
    <property type="match status" value="1"/>
</dbReference>
<dbReference type="Pfam" id="PF02878">
    <property type="entry name" value="PGM_PMM_I"/>
    <property type="match status" value="1"/>
</dbReference>
<dbReference type="Pfam" id="PF02879">
    <property type="entry name" value="PGM_PMM_II"/>
    <property type="match status" value="1"/>
</dbReference>
<dbReference type="Pfam" id="PF02880">
    <property type="entry name" value="PGM_PMM_III"/>
    <property type="match status" value="1"/>
</dbReference>
<dbReference type="Pfam" id="PF00408">
    <property type="entry name" value="PGM_PMM_IV"/>
    <property type="match status" value="1"/>
</dbReference>
<dbReference type="PRINTS" id="PR00509">
    <property type="entry name" value="PGMPMM"/>
</dbReference>
<dbReference type="SUPFAM" id="SSF55957">
    <property type="entry name" value="Phosphoglucomutase, C-terminal domain"/>
    <property type="match status" value="1"/>
</dbReference>
<dbReference type="SUPFAM" id="SSF53738">
    <property type="entry name" value="Phosphoglucomutase, first 3 domains"/>
    <property type="match status" value="3"/>
</dbReference>
<dbReference type="PROSITE" id="PS00710">
    <property type="entry name" value="PGM_PMM"/>
    <property type="match status" value="1"/>
</dbReference>
<comment type="function">
    <text evidence="1">Catalyzes the conversion of glucosamine-6-phosphate to glucosamine-1-phosphate.</text>
</comment>
<comment type="catalytic activity">
    <reaction evidence="1">
        <text>alpha-D-glucosamine 1-phosphate = D-glucosamine 6-phosphate</text>
        <dbReference type="Rhea" id="RHEA:23424"/>
        <dbReference type="ChEBI" id="CHEBI:58516"/>
        <dbReference type="ChEBI" id="CHEBI:58725"/>
        <dbReference type="EC" id="5.4.2.10"/>
    </reaction>
</comment>
<comment type="cofactor">
    <cofactor evidence="1">
        <name>Mg(2+)</name>
        <dbReference type="ChEBI" id="CHEBI:18420"/>
    </cofactor>
    <text evidence="1">Binds 1 Mg(2+) ion per subunit.</text>
</comment>
<comment type="PTM">
    <text evidence="1">Activated by phosphorylation.</text>
</comment>
<comment type="similarity">
    <text evidence="1">Belongs to the phosphohexose mutase family.</text>
</comment>
<proteinExistence type="inferred from homology"/>
<evidence type="ECO:0000255" key="1">
    <source>
        <dbReference type="HAMAP-Rule" id="MF_01554"/>
    </source>
</evidence>
<accession>B1N017</accession>
<name>GLMM_LEUCK</name>
<reference key="1">
    <citation type="journal article" date="2008" name="J. Bacteriol.">
        <title>Complete genome sequence of Leuconostoc citreum KM20.</title>
        <authorList>
            <person name="Kim J.F."/>
            <person name="Jeong H."/>
            <person name="Lee J.-S."/>
            <person name="Choi S.-H."/>
            <person name="Ha M."/>
            <person name="Hur C.-G."/>
            <person name="Kim J.-S."/>
            <person name="Lee S."/>
            <person name="Park H.-S."/>
            <person name="Park Y.-H."/>
            <person name="Oh T.K."/>
        </authorList>
    </citation>
    <scope>NUCLEOTIDE SEQUENCE [LARGE SCALE GENOMIC DNA]</scope>
    <source>
        <strain>KM20</strain>
    </source>
</reference>
<sequence length="455" mass="48525">MSEIKLKYFGTDGVRGIANETLTPELAFRLGRTGGAILTRHAESDKKPVVIVGRDTRISGDMLQQAMIAGFLSVGIDVLRLGVITTPAVAFLVQNLEADAGVQITASHNPAADNGIKFFGKDGFKLSDELEYEIEQLLDSPEDTLPRPSANGLGVASNYPEGALKYMSFLQKTIPTDLSGMQVALDGANGATSDLLPRLFADLNADFVTMGTEPNGLNINDGVGSTHPEALADLVKSSEVQAGLAFDGDGDRLIAVDENGDIVDGDKIMYITGKFMNEQGRLKHSTVVSTVMSNIGFYKALAAHDMTSVKTAVGDRYVMAEMIKSGYNLGGEQSGHIIFRDWATTGDGLLTALQLLYVMKETGQKLSELAADVQVYPQKLVNIAVADKVAIQKNPAVLAKIAEVEAEMAGDGRVLVRPSGTESLLRVMAEAPTTELVEKYVEAIAAVVRDQANVS</sequence>
<keyword id="KW-0413">Isomerase</keyword>
<keyword id="KW-0460">Magnesium</keyword>
<keyword id="KW-0479">Metal-binding</keyword>
<keyword id="KW-0597">Phosphoprotein</keyword>
<keyword id="KW-1185">Reference proteome</keyword>
<feature type="chain" id="PRO_1000201116" description="Phosphoglucosamine mutase">
    <location>
        <begin position="1"/>
        <end position="455"/>
    </location>
</feature>
<feature type="active site" description="Phosphoserine intermediate" evidence="1">
    <location>
        <position position="107"/>
    </location>
</feature>
<feature type="binding site" description="via phosphate group" evidence="1">
    <location>
        <position position="107"/>
    </location>
    <ligand>
        <name>Mg(2+)</name>
        <dbReference type="ChEBI" id="CHEBI:18420"/>
    </ligand>
</feature>
<feature type="binding site" evidence="1">
    <location>
        <position position="247"/>
    </location>
    <ligand>
        <name>Mg(2+)</name>
        <dbReference type="ChEBI" id="CHEBI:18420"/>
    </ligand>
</feature>
<feature type="binding site" evidence="1">
    <location>
        <position position="249"/>
    </location>
    <ligand>
        <name>Mg(2+)</name>
        <dbReference type="ChEBI" id="CHEBI:18420"/>
    </ligand>
</feature>
<feature type="binding site" evidence="1">
    <location>
        <position position="251"/>
    </location>
    <ligand>
        <name>Mg(2+)</name>
        <dbReference type="ChEBI" id="CHEBI:18420"/>
    </ligand>
</feature>
<feature type="modified residue" description="Phosphoserine" evidence="1">
    <location>
        <position position="107"/>
    </location>
</feature>